<keyword id="KW-0963">Cytoplasm</keyword>
<keyword id="KW-0255">Endonuclease</keyword>
<keyword id="KW-0378">Hydrolase</keyword>
<keyword id="KW-0464">Manganese</keyword>
<keyword id="KW-0479">Metal-binding</keyword>
<keyword id="KW-0540">Nuclease</keyword>
<proteinExistence type="inferred from homology"/>
<organism>
    <name type="scientific">Rickettsia canadensis (strain McKiel)</name>
    <dbReference type="NCBI Taxonomy" id="293613"/>
    <lineage>
        <taxon>Bacteria</taxon>
        <taxon>Pseudomonadati</taxon>
        <taxon>Pseudomonadota</taxon>
        <taxon>Alphaproteobacteria</taxon>
        <taxon>Rickettsiales</taxon>
        <taxon>Rickettsiaceae</taxon>
        <taxon>Rickettsieae</taxon>
        <taxon>Rickettsia</taxon>
        <taxon>belli group</taxon>
    </lineage>
</organism>
<protein>
    <recommendedName>
        <fullName evidence="1">Ribonuclease HII</fullName>
        <shortName evidence="1">RNase HII</shortName>
        <ecNumber evidence="1">3.1.26.4</ecNumber>
    </recommendedName>
</protein>
<dbReference type="EC" id="3.1.26.4" evidence="1"/>
<dbReference type="EMBL" id="CP000409">
    <property type="protein sequence ID" value="ABV73158.1"/>
    <property type="molecule type" value="Genomic_DNA"/>
</dbReference>
<dbReference type="RefSeq" id="WP_012148359.1">
    <property type="nucleotide sequence ID" value="NC_009879.1"/>
</dbReference>
<dbReference type="SMR" id="A8EXS5"/>
<dbReference type="STRING" id="293613.A1E_01050"/>
<dbReference type="KEGG" id="rcm:A1E_01050"/>
<dbReference type="eggNOG" id="COG0164">
    <property type="taxonomic scope" value="Bacteria"/>
</dbReference>
<dbReference type="HOGENOM" id="CLU_036532_3_1_5"/>
<dbReference type="Proteomes" id="UP000007056">
    <property type="component" value="Chromosome"/>
</dbReference>
<dbReference type="GO" id="GO:0005737">
    <property type="term" value="C:cytoplasm"/>
    <property type="evidence" value="ECO:0007669"/>
    <property type="project" value="UniProtKB-SubCell"/>
</dbReference>
<dbReference type="GO" id="GO:0032299">
    <property type="term" value="C:ribonuclease H2 complex"/>
    <property type="evidence" value="ECO:0007669"/>
    <property type="project" value="TreeGrafter"/>
</dbReference>
<dbReference type="GO" id="GO:0030145">
    <property type="term" value="F:manganese ion binding"/>
    <property type="evidence" value="ECO:0007669"/>
    <property type="project" value="UniProtKB-UniRule"/>
</dbReference>
<dbReference type="GO" id="GO:0003723">
    <property type="term" value="F:RNA binding"/>
    <property type="evidence" value="ECO:0007669"/>
    <property type="project" value="InterPro"/>
</dbReference>
<dbReference type="GO" id="GO:0004523">
    <property type="term" value="F:RNA-DNA hybrid ribonuclease activity"/>
    <property type="evidence" value="ECO:0007669"/>
    <property type="project" value="UniProtKB-UniRule"/>
</dbReference>
<dbReference type="GO" id="GO:0043137">
    <property type="term" value="P:DNA replication, removal of RNA primer"/>
    <property type="evidence" value="ECO:0007669"/>
    <property type="project" value="TreeGrafter"/>
</dbReference>
<dbReference type="GO" id="GO:0006298">
    <property type="term" value="P:mismatch repair"/>
    <property type="evidence" value="ECO:0007669"/>
    <property type="project" value="TreeGrafter"/>
</dbReference>
<dbReference type="CDD" id="cd07182">
    <property type="entry name" value="RNase_HII_bacteria_HII_like"/>
    <property type="match status" value="1"/>
</dbReference>
<dbReference type="Gene3D" id="3.30.420.10">
    <property type="entry name" value="Ribonuclease H-like superfamily/Ribonuclease H"/>
    <property type="match status" value="1"/>
</dbReference>
<dbReference type="HAMAP" id="MF_00052_B">
    <property type="entry name" value="RNase_HII_B"/>
    <property type="match status" value="1"/>
</dbReference>
<dbReference type="InterPro" id="IPR022898">
    <property type="entry name" value="RNase_HII"/>
</dbReference>
<dbReference type="InterPro" id="IPR001352">
    <property type="entry name" value="RNase_HII/HIII"/>
</dbReference>
<dbReference type="InterPro" id="IPR024567">
    <property type="entry name" value="RNase_HII/HIII_dom"/>
</dbReference>
<dbReference type="InterPro" id="IPR012337">
    <property type="entry name" value="RNaseH-like_sf"/>
</dbReference>
<dbReference type="InterPro" id="IPR036397">
    <property type="entry name" value="RNaseH_sf"/>
</dbReference>
<dbReference type="NCBIfam" id="NF000594">
    <property type="entry name" value="PRK00015.1-1"/>
    <property type="match status" value="1"/>
</dbReference>
<dbReference type="NCBIfam" id="NF000595">
    <property type="entry name" value="PRK00015.1-3"/>
    <property type="match status" value="1"/>
</dbReference>
<dbReference type="PANTHER" id="PTHR10954">
    <property type="entry name" value="RIBONUCLEASE H2 SUBUNIT A"/>
    <property type="match status" value="1"/>
</dbReference>
<dbReference type="PANTHER" id="PTHR10954:SF18">
    <property type="entry name" value="RIBONUCLEASE HII"/>
    <property type="match status" value="1"/>
</dbReference>
<dbReference type="Pfam" id="PF01351">
    <property type="entry name" value="RNase_HII"/>
    <property type="match status" value="1"/>
</dbReference>
<dbReference type="SUPFAM" id="SSF53098">
    <property type="entry name" value="Ribonuclease H-like"/>
    <property type="match status" value="1"/>
</dbReference>
<dbReference type="PROSITE" id="PS51975">
    <property type="entry name" value="RNASE_H_2"/>
    <property type="match status" value="1"/>
</dbReference>
<name>RNH2_RICCK</name>
<accession>A8EXS5</accession>
<feature type="chain" id="PRO_1000031196" description="Ribonuclease HII">
    <location>
        <begin position="1"/>
        <end position="196"/>
    </location>
</feature>
<feature type="domain" description="RNase H type-2" evidence="2">
    <location>
        <begin position="15"/>
        <end position="196"/>
    </location>
</feature>
<feature type="binding site" evidence="1">
    <location>
        <position position="21"/>
    </location>
    <ligand>
        <name>a divalent metal cation</name>
        <dbReference type="ChEBI" id="CHEBI:60240"/>
    </ligand>
</feature>
<feature type="binding site" evidence="1">
    <location>
        <position position="22"/>
    </location>
    <ligand>
        <name>a divalent metal cation</name>
        <dbReference type="ChEBI" id="CHEBI:60240"/>
    </ligand>
</feature>
<feature type="binding site" evidence="1">
    <location>
        <position position="112"/>
    </location>
    <ligand>
        <name>a divalent metal cation</name>
        <dbReference type="ChEBI" id="CHEBI:60240"/>
    </ligand>
</feature>
<gene>
    <name evidence="1" type="primary">rnhB</name>
    <name type="ordered locus">A1E_01050</name>
</gene>
<evidence type="ECO:0000255" key="1">
    <source>
        <dbReference type="HAMAP-Rule" id="MF_00052"/>
    </source>
</evidence>
<evidence type="ECO:0000255" key="2">
    <source>
        <dbReference type="PROSITE-ProRule" id="PRU01319"/>
    </source>
</evidence>
<sequence>MEIDLLQYEKKYQEYIVAGIDEAGRGPLAGPVVASAVVIDNTNIITGIKDSKKLSKRKRELLYEQITSNYIWSTAIISHTEIDEINILEATKKACSIAAANLTIKPEIVLVDGNMQFNDKRFVSIIKGDNLSLSIAAASIVAKITRDRLMLDLSTEFPQYLWYKNSGYGTKEHIQAINTHGLSPYHRKSFRYSCFI</sequence>
<comment type="function">
    <text evidence="1">Endonuclease that specifically degrades the RNA of RNA-DNA hybrids.</text>
</comment>
<comment type="catalytic activity">
    <reaction evidence="1">
        <text>Endonucleolytic cleavage to 5'-phosphomonoester.</text>
        <dbReference type="EC" id="3.1.26.4"/>
    </reaction>
</comment>
<comment type="cofactor">
    <cofactor evidence="1">
        <name>Mn(2+)</name>
        <dbReference type="ChEBI" id="CHEBI:29035"/>
    </cofactor>
    <cofactor evidence="1">
        <name>Mg(2+)</name>
        <dbReference type="ChEBI" id="CHEBI:18420"/>
    </cofactor>
    <text evidence="1">Manganese or magnesium. Binds 1 divalent metal ion per monomer in the absence of substrate. May bind a second metal ion after substrate binding.</text>
</comment>
<comment type="subcellular location">
    <subcellularLocation>
        <location evidence="1">Cytoplasm</location>
    </subcellularLocation>
</comment>
<comment type="similarity">
    <text evidence="1">Belongs to the RNase HII family.</text>
</comment>
<reference key="1">
    <citation type="submission" date="2007-09" db="EMBL/GenBank/DDBJ databases">
        <title>Complete genome sequence of Rickettsia canadensis.</title>
        <authorList>
            <person name="Madan A."/>
            <person name="Fahey J."/>
            <person name="Helton E."/>
            <person name="Ketteman M."/>
            <person name="Madan A."/>
            <person name="Rodrigues S."/>
            <person name="Sanchez A."/>
            <person name="Whiting M."/>
            <person name="Dasch G."/>
            <person name="Eremeeva M."/>
        </authorList>
    </citation>
    <scope>NUCLEOTIDE SEQUENCE [LARGE SCALE GENOMIC DNA]</scope>
    <source>
        <strain>McKiel</strain>
    </source>
</reference>